<comment type="subunit">
    <text evidence="1">Homodimer.</text>
</comment>
<comment type="similarity">
    <text evidence="1">Belongs to the UPF0210 family.</text>
</comment>
<accession>C0ME92</accession>
<evidence type="ECO:0000255" key="1">
    <source>
        <dbReference type="HAMAP-Rule" id="MF_01221"/>
    </source>
</evidence>
<sequence>MDIRQVRETVEMIEEQHFDIRTITMGISLLDCVDSDIDRAAAKIYQKITTKAANLVAVGDDIAAELGIPIVNKRVSVTPIALIGAATDAEDYLPLAKALDQAACDIGVDFIGGFSALVQKGYQKGDKILIESIPQALAQTKKVCASVNVGSTRSGINMTAVADMGRIIKETAKASEMGAAKLVVFANAVEDNPFMAGAFHGVGEADTVINVGVSGPGVVKRALEKVRGESFDVLAETVKKTAFKITRIGQLVGQMASERLGVGFGVVDLSLAPTPAVGDSVARVLEEMGLEMVGTHGTAAALALLNDAVKKGGVMACNRVGGLSGAFIPVSEDEGMIAAVQGGSLNLEKLEAMTAICSVGLDMIAIPEETPSETIAAMIADEAAIGVINQKTTAVRIIPKGKEGDMIAFGGLLGTAPVMPVNPHSSLEFIARGGQIPAPIHSFKN</sequence>
<name>Y1584_STRS7</name>
<dbReference type="EMBL" id="FM204884">
    <property type="protein sequence ID" value="CAX00300.1"/>
    <property type="molecule type" value="Genomic_DNA"/>
</dbReference>
<dbReference type="SMR" id="C0ME92"/>
<dbReference type="KEGG" id="seq:SZO_15840"/>
<dbReference type="eggNOG" id="COG2848">
    <property type="taxonomic scope" value="Bacteria"/>
</dbReference>
<dbReference type="HOGENOM" id="CLU_048704_0_0_9"/>
<dbReference type="Proteomes" id="UP000001368">
    <property type="component" value="Chromosome"/>
</dbReference>
<dbReference type="CDD" id="cd08025">
    <property type="entry name" value="RNR_PFL_like_DUF711"/>
    <property type="match status" value="1"/>
</dbReference>
<dbReference type="Gene3D" id="3.20.70.20">
    <property type="match status" value="1"/>
</dbReference>
<dbReference type="HAMAP" id="MF_01221">
    <property type="entry name" value="UPF0210"/>
    <property type="match status" value="1"/>
</dbReference>
<dbReference type="InterPro" id="IPR007841">
    <property type="entry name" value="UPF0210"/>
</dbReference>
<dbReference type="NCBIfam" id="NF003700">
    <property type="entry name" value="PRK05313.1"/>
    <property type="match status" value="1"/>
</dbReference>
<dbReference type="PANTHER" id="PTHR37560:SF1">
    <property type="entry name" value="UPF0210 PROTEIN MJ1665"/>
    <property type="match status" value="1"/>
</dbReference>
<dbReference type="PANTHER" id="PTHR37560">
    <property type="entry name" value="UPF0210 PROTEIN SPR0218"/>
    <property type="match status" value="1"/>
</dbReference>
<dbReference type="Pfam" id="PF05167">
    <property type="entry name" value="DUF711"/>
    <property type="match status" value="1"/>
</dbReference>
<dbReference type="SUPFAM" id="SSF51998">
    <property type="entry name" value="PFL-like glycyl radical enzymes"/>
    <property type="match status" value="1"/>
</dbReference>
<reference key="1">
    <citation type="journal article" date="2009" name="PLoS Pathog.">
        <title>Genomic evidence for the evolution of Streptococcus equi: host restriction, increased virulence, and genetic exchange with human pathogens.</title>
        <authorList>
            <person name="Holden M.T.G."/>
            <person name="Heather Z."/>
            <person name="Paillot R."/>
            <person name="Steward K.F."/>
            <person name="Webb K."/>
            <person name="Ainslie F."/>
            <person name="Jourdan T."/>
            <person name="Bason N.C."/>
            <person name="Holroyd N.E."/>
            <person name="Mungall K."/>
            <person name="Quail M.A."/>
            <person name="Sanders M."/>
            <person name="Simmonds M."/>
            <person name="Willey D."/>
            <person name="Brooks K."/>
            <person name="Aanensen D.M."/>
            <person name="Spratt B.G."/>
            <person name="Jolley K.A."/>
            <person name="Maiden M.C.J."/>
            <person name="Kehoe M."/>
            <person name="Chanter N."/>
            <person name="Bentley S.D."/>
            <person name="Robinson C."/>
            <person name="Maskell D.J."/>
            <person name="Parkhill J."/>
            <person name="Waller A.S."/>
        </authorList>
    </citation>
    <scope>NUCLEOTIDE SEQUENCE [LARGE SCALE GENOMIC DNA]</scope>
    <source>
        <strain>H70</strain>
    </source>
</reference>
<protein>
    <recommendedName>
        <fullName evidence="1">UPF0210 protein SZO_15840</fullName>
    </recommendedName>
</protein>
<feature type="chain" id="PRO_1000213969" description="UPF0210 protein SZO_15840">
    <location>
        <begin position="1"/>
        <end position="445"/>
    </location>
</feature>
<proteinExistence type="inferred from homology"/>
<gene>
    <name type="ordered locus">SZO_15840</name>
</gene>
<organism>
    <name type="scientific">Streptococcus equi subsp. zooepidemicus (strain H70)</name>
    <dbReference type="NCBI Taxonomy" id="553483"/>
    <lineage>
        <taxon>Bacteria</taxon>
        <taxon>Bacillati</taxon>
        <taxon>Bacillota</taxon>
        <taxon>Bacilli</taxon>
        <taxon>Lactobacillales</taxon>
        <taxon>Streptococcaceae</taxon>
        <taxon>Streptococcus</taxon>
    </lineage>
</organism>